<organism>
    <name type="scientific">Homo sapiens</name>
    <name type="common">Human</name>
    <dbReference type="NCBI Taxonomy" id="9606"/>
    <lineage>
        <taxon>Eukaryota</taxon>
        <taxon>Metazoa</taxon>
        <taxon>Chordata</taxon>
        <taxon>Craniata</taxon>
        <taxon>Vertebrata</taxon>
        <taxon>Euteleostomi</taxon>
        <taxon>Mammalia</taxon>
        <taxon>Eutheria</taxon>
        <taxon>Euarchontoglires</taxon>
        <taxon>Primates</taxon>
        <taxon>Haplorrhini</taxon>
        <taxon>Catarrhini</taxon>
        <taxon>Hominidae</taxon>
        <taxon>Homo</taxon>
    </lineage>
</organism>
<protein>
    <recommendedName>
        <fullName>Galactosylgalactosylxylosylprotein 3-beta-glucuronosyltransferase 2</fullName>
        <ecNumber evidence="2">2.4.1.135</ecNumber>
    </recommendedName>
    <alternativeName>
        <fullName>Beta-1,3-glucuronyltransferase 2</fullName>
    </alternativeName>
    <alternativeName>
        <fullName>GlcAT-D</fullName>
    </alternativeName>
    <alternativeName>
        <fullName>UDP-glucuronosyltransferase S</fullName>
        <shortName>GlcAT-S</shortName>
        <shortName>Glucuronosyltransferase S</shortName>
    </alternativeName>
</protein>
<sequence>MKSALFTRFFILLPWILIVIIMLDVDTRRPVPPLTPRPYFSPYAVGRGGARLPLRRGGPAHGTQKRNQSRPQPQPEPQLPTIYAITPTYSRPVQKAELTRLANTFRQVAQLHWILVEDAAARSELVSRFLARAGLPSTHLHVPTPRRYKRPGLPRATEQRNAGLAWLRQRHQHQRAQPGVLFFADDDNTYSLELFQEMRTTRKVSVWPVGLVGGRRYERPLVENGKVVGWYTGWRADRPFAIDMAGFAVSLQVILSNPKAVFKRRGSQPGMQESDFLKQITTVEELEPKANNCTKVLVWHTRTEKVNLANEPKYHLDTVKIEV</sequence>
<keyword id="KW-0002">3D-structure</keyword>
<keyword id="KW-0325">Glycoprotein</keyword>
<keyword id="KW-0333">Golgi apparatus</keyword>
<keyword id="KW-0464">Manganese</keyword>
<keyword id="KW-0472">Membrane</keyword>
<keyword id="KW-0479">Metal-binding</keyword>
<keyword id="KW-1185">Reference proteome</keyword>
<keyword id="KW-0735">Signal-anchor</keyword>
<keyword id="KW-0808">Transferase</keyword>
<keyword id="KW-0812">Transmembrane</keyword>
<keyword id="KW-1133">Transmembrane helix</keyword>
<name>B3GA2_HUMAN</name>
<proteinExistence type="evidence at protein level"/>
<reference key="1">
    <citation type="journal article" date="2002" name="J. Hum. Genet.">
        <title>Cloning, characterization, and chromosome mapping of the human GlcAT-S gene.</title>
        <authorList>
            <person name="Marcos I."/>
            <person name="Galan J.J."/>
            <person name="Borrego S."/>
            <person name="Antinolo G."/>
        </authorList>
    </citation>
    <scope>NUCLEOTIDE SEQUENCE [MRNA]</scope>
</reference>
<reference key="2">
    <citation type="journal article" date="2001" name="DNA Res.">
        <title>Prediction of the coding sequences of unidentified human genes. XXII. The complete sequences of 50 new cDNA clones which code for large proteins.</title>
        <authorList>
            <person name="Nagase T."/>
            <person name="Kikuno R."/>
            <person name="Ohara O."/>
        </authorList>
    </citation>
    <scope>NUCLEOTIDE SEQUENCE [LARGE SCALE MRNA]</scope>
    <source>
        <tissue>Brain</tissue>
    </source>
</reference>
<reference key="3">
    <citation type="journal article" date="2003" name="Nature">
        <title>The DNA sequence and analysis of human chromosome 6.</title>
        <authorList>
            <person name="Mungall A.J."/>
            <person name="Palmer S.A."/>
            <person name="Sims S.K."/>
            <person name="Edwards C.A."/>
            <person name="Ashurst J.L."/>
            <person name="Wilming L."/>
            <person name="Jones M.C."/>
            <person name="Horton R."/>
            <person name="Hunt S.E."/>
            <person name="Scott C.E."/>
            <person name="Gilbert J.G.R."/>
            <person name="Clamp M.E."/>
            <person name="Bethel G."/>
            <person name="Milne S."/>
            <person name="Ainscough R."/>
            <person name="Almeida J.P."/>
            <person name="Ambrose K.D."/>
            <person name="Andrews T.D."/>
            <person name="Ashwell R.I.S."/>
            <person name="Babbage A.K."/>
            <person name="Bagguley C.L."/>
            <person name="Bailey J."/>
            <person name="Banerjee R."/>
            <person name="Barker D.J."/>
            <person name="Barlow K.F."/>
            <person name="Bates K."/>
            <person name="Beare D.M."/>
            <person name="Beasley H."/>
            <person name="Beasley O."/>
            <person name="Bird C.P."/>
            <person name="Blakey S.E."/>
            <person name="Bray-Allen S."/>
            <person name="Brook J."/>
            <person name="Brown A.J."/>
            <person name="Brown J.Y."/>
            <person name="Burford D.C."/>
            <person name="Burrill W."/>
            <person name="Burton J."/>
            <person name="Carder C."/>
            <person name="Carter N.P."/>
            <person name="Chapman J.C."/>
            <person name="Clark S.Y."/>
            <person name="Clark G."/>
            <person name="Clee C.M."/>
            <person name="Clegg S."/>
            <person name="Cobley V."/>
            <person name="Collier R.E."/>
            <person name="Collins J.E."/>
            <person name="Colman L.K."/>
            <person name="Corby N.R."/>
            <person name="Coville G.J."/>
            <person name="Culley K.M."/>
            <person name="Dhami P."/>
            <person name="Davies J."/>
            <person name="Dunn M."/>
            <person name="Earthrowl M.E."/>
            <person name="Ellington A.E."/>
            <person name="Evans K.A."/>
            <person name="Faulkner L."/>
            <person name="Francis M.D."/>
            <person name="Frankish A."/>
            <person name="Frankland J."/>
            <person name="French L."/>
            <person name="Garner P."/>
            <person name="Garnett J."/>
            <person name="Ghori M.J."/>
            <person name="Gilby L.M."/>
            <person name="Gillson C.J."/>
            <person name="Glithero R.J."/>
            <person name="Grafham D.V."/>
            <person name="Grant M."/>
            <person name="Gribble S."/>
            <person name="Griffiths C."/>
            <person name="Griffiths M.N.D."/>
            <person name="Hall R."/>
            <person name="Halls K.S."/>
            <person name="Hammond S."/>
            <person name="Harley J.L."/>
            <person name="Hart E.A."/>
            <person name="Heath P.D."/>
            <person name="Heathcott R."/>
            <person name="Holmes S.J."/>
            <person name="Howden P.J."/>
            <person name="Howe K.L."/>
            <person name="Howell G.R."/>
            <person name="Huckle E."/>
            <person name="Humphray S.J."/>
            <person name="Humphries M.D."/>
            <person name="Hunt A.R."/>
            <person name="Johnson C.M."/>
            <person name="Joy A.A."/>
            <person name="Kay M."/>
            <person name="Keenan S.J."/>
            <person name="Kimberley A.M."/>
            <person name="King A."/>
            <person name="Laird G.K."/>
            <person name="Langford C."/>
            <person name="Lawlor S."/>
            <person name="Leongamornlert D.A."/>
            <person name="Leversha M."/>
            <person name="Lloyd C.R."/>
            <person name="Lloyd D.M."/>
            <person name="Loveland J.E."/>
            <person name="Lovell J."/>
            <person name="Martin S."/>
            <person name="Mashreghi-Mohammadi M."/>
            <person name="Maslen G.L."/>
            <person name="Matthews L."/>
            <person name="McCann O.T."/>
            <person name="McLaren S.J."/>
            <person name="McLay K."/>
            <person name="McMurray A."/>
            <person name="Moore M.J.F."/>
            <person name="Mullikin J.C."/>
            <person name="Niblett D."/>
            <person name="Nickerson T."/>
            <person name="Novik K.L."/>
            <person name="Oliver K."/>
            <person name="Overton-Larty E.K."/>
            <person name="Parker A."/>
            <person name="Patel R."/>
            <person name="Pearce A.V."/>
            <person name="Peck A.I."/>
            <person name="Phillimore B.J.C.T."/>
            <person name="Phillips S."/>
            <person name="Plumb R.W."/>
            <person name="Porter K.M."/>
            <person name="Ramsey Y."/>
            <person name="Ranby S.A."/>
            <person name="Rice C.M."/>
            <person name="Ross M.T."/>
            <person name="Searle S.M."/>
            <person name="Sehra H.K."/>
            <person name="Sheridan E."/>
            <person name="Skuce C.D."/>
            <person name="Smith S."/>
            <person name="Smith M."/>
            <person name="Spraggon L."/>
            <person name="Squares S.L."/>
            <person name="Steward C.A."/>
            <person name="Sycamore N."/>
            <person name="Tamlyn-Hall G."/>
            <person name="Tester J."/>
            <person name="Theaker A.J."/>
            <person name="Thomas D.W."/>
            <person name="Thorpe A."/>
            <person name="Tracey A."/>
            <person name="Tromans A."/>
            <person name="Tubby B."/>
            <person name="Wall M."/>
            <person name="Wallis J.M."/>
            <person name="West A.P."/>
            <person name="White S.S."/>
            <person name="Whitehead S.L."/>
            <person name="Whittaker H."/>
            <person name="Wild A."/>
            <person name="Willey D.J."/>
            <person name="Wilmer T.E."/>
            <person name="Wood J.M."/>
            <person name="Wray P.W."/>
            <person name="Wyatt J.C."/>
            <person name="Young L."/>
            <person name="Younger R.M."/>
            <person name="Bentley D.R."/>
            <person name="Coulson A."/>
            <person name="Durbin R.M."/>
            <person name="Hubbard T."/>
            <person name="Sulston J.E."/>
            <person name="Dunham I."/>
            <person name="Rogers J."/>
            <person name="Beck S."/>
        </authorList>
    </citation>
    <scope>NUCLEOTIDE SEQUENCE [LARGE SCALE GENOMIC DNA]</scope>
</reference>
<reference key="4">
    <citation type="journal article" date="2004" name="Nat. Genet.">
        <title>Complete sequencing and characterization of 21,243 full-length human cDNAs.</title>
        <authorList>
            <person name="Ota T."/>
            <person name="Suzuki Y."/>
            <person name="Nishikawa T."/>
            <person name="Otsuki T."/>
            <person name="Sugiyama T."/>
            <person name="Irie R."/>
            <person name="Wakamatsu A."/>
            <person name="Hayashi K."/>
            <person name="Sato H."/>
            <person name="Nagai K."/>
            <person name="Kimura K."/>
            <person name="Makita H."/>
            <person name="Sekine M."/>
            <person name="Obayashi M."/>
            <person name="Nishi T."/>
            <person name="Shibahara T."/>
            <person name="Tanaka T."/>
            <person name="Ishii S."/>
            <person name="Yamamoto J."/>
            <person name="Saito K."/>
            <person name="Kawai Y."/>
            <person name="Isono Y."/>
            <person name="Nakamura Y."/>
            <person name="Nagahari K."/>
            <person name="Murakami K."/>
            <person name="Yasuda T."/>
            <person name="Iwayanagi T."/>
            <person name="Wagatsuma M."/>
            <person name="Shiratori A."/>
            <person name="Sudo H."/>
            <person name="Hosoiri T."/>
            <person name="Kaku Y."/>
            <person name="Kodaira H."/>
            <person name="Kondo H."/>
            <person name="Sugawara M."/>
            <person name="Takahashi M."/>
            <person name="Kanda K."/>
            <person name="Yokoi T."/>
            <person name="Furuya T."/>
            <person name="Kikkawa E."/>
            <person name="Omura Y."/>
            <person name="Abe K."/>
            <person name="Kamihara K."/>
            <person name="Katsuta N."/>
            <person name="Sato K."/>
            <person name="Tanikawa M."/>
            <person name="Yamazaki M."/>
            <person name="Ninomiya K."/>
            <person name="Ishibashi T."/>
            <person name="Yamashita H."/>
            <person name="Murakawa K."/>
            <person name="Fujimori K."/>
            <person name="Tanai H."/>
            <person name="Kimata M."/>
            <person name="Watanabe M."/>
            <person name="Hiraoka S."/>
            <person name="Chiba Y."/>
            <person name="Ishida S."/>
            <person name="Ono Y."/>
            <person name="Takiguchi S."/>
            <person name="Watanabe S."/>
            <person name="Yosida M."/>
            <person name="Hotuta T."/>
            <person name="Kusano J."/>
            <person name="Kanehori K."/>
            <person name="Takahashi-Fujii A."/>
            <person name="Hara H."/>
            <person name="Tanase T.-O."/>
            <person name="Nomura Y."/>
            <person name="Togiya S."/>
            <person name="Komai F."/>
            <person name="Hara R."/>
            <person name="Takeuchi K."/>
            <person name="Arita M."/>
            <person name="Imose N."/>
            <person name="Musashino K."/>
            <person name="Yuuki H."/>
            <person name="Oshima A."/>
            <person name="Sasaki N."/>
            <person name="Aotsuka S."/>
            <person name="Yoshikawa Y."/>
            <person name="Matsunawa H."/>
            <person name="Ichihara T."/>
            <person name="Shiohata N."/>
            <person name="Sano S."/>
            <person name="Moriya S."/>
            <person name="Momiyama H."/>
            <person name="Satoh N."/>
            <person name="Takami S."/>
            <person name="Terashima Y."/>
            <person name="Suzuki O."/>
            <person name="Nakagawa S."/>
            <person name="Senoh A."/>
            <person name="Mizoguchi H."/>
            <person name="Goto Y."/>
            <person name="Shimizu F."/>
            <person name="Wakebe H."/>
            <person name="Hishigaki H."/>
            <person name="Watanabe T."/>
            <person name="Sugiyama A."/>
            <person name="Takemoto M."/>
            <person name="Kawakami B."/>
            <person name="Yamazaki M."/>
            <person name="Watanabe K."/>
            <person name="Kumagai A."/>
            <person name="Itakura S."/>
            <person name="Fukuzumi Y."/>
            <person name="Fujimori Y."/>
            <person name="Komiyama M."/>
            <person name="Tashiro H."/>
            <person name="Tanigami A."/>
            <person name="Fujiwara T."/>
            <person name="Ono T."/>
            <person name="Yamada K."/>
            <person name="Fujii Y."/>
            <person name="Ozaki K."/>
            <person name="Hirao M."/>
            <person name="Ohmori Y."/>
            <person name="Kawabata A."/>
            <person name="Hikiji T."/>
            <person name="Kobatake N."/>
            <person name="Inagaki H."/>
            <person name="Ikema Y."/>
            <person name="Okamoto S."/>
            <person name="Okitani R."/>
            <person name="Kawakami T."/>
            <person name="Noguchi S."/>
            <person name="Itoh T."/>
            <person name="Shigeta K."/>
            <person name="Senba T."/>
            <person name="Matsumura K."/>
            <person name="Nakajima Y."/>
            <person name="Mizuno T."/>
            <person name="Morinaga M."/>
            <person name="Sasaki M."/>
            <person name="Togashi T."/>
            <person name="Oyama M."/>
            <person name="Hata H."/>
            <person name="Watanabe M."/>
            <person name="Komatsu T."/>
            <person name="Mizushima-Sugano J."/>
            <person name="Satoh T."/>
            <person name="Shirai Y."/>
            <person name="Takahashi Y."/>
            <person name="Nakagawa K."/>
            <person name="Okumura K."/>
            <person name="Nagase T."/>
            <person name="Nomura N."/>
            <person name="Kikuchi H."/>
            <person name="Masuho Y."/>
            <person name="Yamashita R."/>
            <person name="Nakai K."/>
            <person name="Yada T."/>
            <person name="Nakamura Y."/>
            <person name="Ohara O."/>
            <person name="Isogai T."/>
            <person name="Sugano S."/>
        </authorList>
    </citation>
    <scope>NUCLEOTIDE SEQUENCE [LARGE SCALE MRNA] OF 157-323</scope>
    <source>
        <tissue>Fetal brain</tissue>
    </source>
</reference>
<reference key="5">
    <citation type="journal article" date="2006" name="Proteins">
        <title>Crystal structure of GlcAT-S, a human glucuronyltransferase, involved in the biosynthesis of the HNK-1 carbohydrate epitope.</title>
        <authorList>
            <person name="Shiba T."/>
            <person name="Kakuda S."/>
            <person name="Ishiguro M."/>
            <person name="Morita I."/>
            <person name="Oka S."/>
            <person name="Kawasaki T."/>
            <person name="Wakatsuki S."/>
            <person name="Kato R."/>
        </authorList>
    </citation>
    <scope>X-RAY CRYSTALLOGRAPHY (2.0 ANGSTROMS) OF 78-323</scope>
</reference>
<feature type="chain" id="PRO_0000195172" description="Galactosylgalactosylxylosylprotein 3-beta-glucuronosyltransferase 2">
    <location>
        <begin position="1"/>
        <end position="323"/>
    </location>
</feature>
<feature type="topological domain" description="Cytoplasmic" evidence="3">
    <location>
        <begin position="1"/>
        <end position="2"/>
    </location>
</feature>
<feature type="transmembrane region" description="Helical; Signal-anchor for type II membrane protein" evidence="3">
    <location>
        <begin position="3"/>
        <end position="23"/>
    </location>
</feature>
<feature type="topological domain" description="Lumenal" evidence="3">
    <location>
        <begin position="24"/>
        <end position="323"/>
    </location>
</feature>
<feature type="region of interest" description="Disordered" evidence="4">
    <location>
        <begin position="51"/>
        <end position="80"/>
    </location>
</feature>
<feature type="region of interest" description="Interaction with galactose moiety of substrate glycoprotein" evidence="1">
    <location>
        <begin position="234"/>
        <end position="243"/>
    </location>
</feature>
<feature type="active site" description="Proton donor/acceptor" evidence="1">
    <location>
        <position position="273"/>
    </location>
</feature>
<feature type="binding site" evidence="1">
    <location>
        <begin position="87"/>
        <end position="89"/>
    </location>
    <ligand>
        <name>UDP-alpha-D-glucuronate</name>
        <dbReference type="ChEBI" id="CHEBI:58052"/>
    </ligand>
</feature>
<feature type="binding site" evidence="1">
    <location>
        <position position="118"/>
    </location>
    <ligand>
        <name>UDP-alpha-D-glucuronate</name>
        <dbReference type="ChEBI" id="CHEBI:58052"/>
    </ligand>
</feature>
<feature type="binding site" evidence="1">
    <location>
        <position position="155"/>
    </location>
    <ligand>
        <name>UDP-alpha-D-glucuronate</name>
        <dbReference type="ChEBI" id="CHEBI:58052"/>
    </ligand>
</feature>
<feature type="binding site" evidence="1">
    <location>
        <position position="160"/>
    </location>
    <ligand>
        <name>UDP-alpha-D-glucuronate</name>
        <dbReference type="ChEBI" id="CHEBI:58052"/>
    </ligand>
</feature>
<feature type="binding site" evidence="1">
    <location>
        <begin position="185"/>
        <end position="187"/>
    </location>
    <ligand>
        <name>UDP-alpha-D-glucuronate</name>
        <dbReference type="ChEBI" id="CHEBI:58052"/>
    </ligand>
</feature>
<feature type="binding site" evidence="1">
    <location>
        <position position="187"/>
    </location>
    <ligand>
        <name>Mn(2+)</name>
        <dbReference type="ChEBI" id="CHEBI:29035"/>
    </ligand>
</feature>
<feature type="binding site" evidence="1">
    <location>
        <begin position="300"/>
        <end position="302"/>
    </location>
    <ligand>
        <name>UDP-alpha-D-glucuronate</name>
        <dbReference type="ChEBI" id="CHEBI:58052"/>
    </ligand>
</feature>
<feature type="site" description="Interaction with galactose moiety of substrate glycoprotein" evidence="1">
    <location>
        <position position="218"/>
    </location>
</feature>
<feature type="site" description="Interaction with galactose moiety of substrate glycoprotein" evidence="1">
    <location>
        <position position="310"/>
    </location>
</feature>
<feature type="glycosylation site" description="N-linked (GlcNAc...) asparagine" evidence="3">
    <location>
        <position position="67"/>
    </location>
</feature>
<feature type="glycosylation site" description="N-linked (GlcNAc...) asparagine" evidence="3">
    <location>
        <position position="292"/>
    </location>
</feature>
<feature type="strand" evidence="6">
    <location>
        <begin position="82"/>
        <end position="88"/>
    </location>
</feature>
<feature type="helix" evidence="6">
    <location>
        <begin position="94"/>
        <end position="105"/>
    </location>
</feature>
<feature type="strand" evidence="6">
    <location>
        <begin position="111"/>
        <end position="121"/>
    </location>
</feature>
<feature type="helix" evidence="6">
    <location>
        <begin position="124"/>
        <end position="132"/>
    </location>
</feature>
<feature type="strand" evidence="6">
    <location>
        <begin position="137"/>
        <end position="141"/>
    </location>
</feature>
<feature type="helix" evidence="6">
    <location>
        <begin position="157"/>
        <end position="170"/>
    </location>
</feature>
<feature type="strand" evidence="6">
    <location>
        <begin position="173"/>
        <end position="175"/>
    </location>
</feature>
<feature type="strand" evidence="6">
    <location>
        <begin position="180"/>
        <end position="183"/>
    </location>
</feature>
<feature type="helix" evidence="6">
    <location>
        <begin position="193"/>
        <end position="198"/>
    </location>
</feature>
<feature type="strand" evidence="6">
    <location>
        <begin position="202"/>
        <end position="206"/>
    </location>
</feature>
<feature type="strand" evidence="6">
    <location>
        <begin position="209"/>
        <end position="212"/>
    </location>
</feature>
<feature type="strand" evidence="6">
    <location>
        <begin position="215"/>
        <end position="223"/>
    </location>
</feature>
<feature type="strand" evidence="6">
    <location>
        <begin position="226"/>
        <end position="231"/>
    </location>
</feature>
<feature type="helix" evidence="6">
    <location>
        <begin position="244"/>
        <end position="246"/>
    </location>
</feature>
<feature type="strand" evidence="6">
    <location>
        <begin position="247"/>
        <end position="250"/>
    </location>
</feature>
<feature type="helix" evidence="6">
    <location>
        <begin position="251"/>
        <end position="256"/>
    </location>
</feature>
<feature type="strand" evidence="6">
    <location>
        <begin position="266"/>
        <end position="268"/>
    </location>
</feature>
<feature type="helix" evidence="6">
    <location>
        <begin position="269"/>
        <end position="271"/>
    </location>
</feature>
<feature type="helix" evidence="6">
    <location>
        <begin position="272"/>
        <end position="278"/>
    </location>
</feature>
<feature type="helix" evidence="6">
    <location>
        <begin position="283"/>
        <end position="285"/>
    </location>
</feature>
<feature type="helix" evidence="6">
    <location>
        <begin position="290"/>
        <end position="293"/>
    </location>
</feature>
<feature type="strand" evidence="6">
    <location>
        <begin position="313"/>
        <end position="315"/>
    </location>
</feature>
<accession>Q9NPZ5</accession>
<accession>Q5JS09</accession>
<accession>Q8TF38</accession>
<accession>Q96NK4</accession>
<evidence type="ECO:0000250" key="1"/>
<evidence type="ECO:0000250" key="2">
    <source>
        <dbReference type="UniProtKB" id="O35789"/>
    </source>
</evidence>
<evidence type="ECO:0000255" key="3"/>
<evidence type="ECO:0000256" key="4">
    <source>
        <dbReference type="SAM" id="MobiDB-lite"/>
    </source>
</evidence>
<evidence type="ECO:0000305" key="5"/>
<evidence type="ECO:0007829" key="6">
    <source>
        <dbReference type="PDB" id="2D0J"/>
    </source>
</evidence>
<comment type="function">
    <text evidence="2">Involved in the biosynthesis of L2/HNK-1 carbohydrate epitope on both glycolipids and glycoproteins.</text>
</comment>
<comment type="catalytic activity">
    <reaction evidence="2">
        <text>3-O-(beta-D-galactosyl-(1-&gt;3)-beta-D-galactosyl-(1-&gt;4)-beta-D-xylosyl)-L-seryl-[protein] + UDP-alpha-D-glucuronate = 3-O-(beta-D-GlcA-(1-&gt;3)-beta-D-Gal-(1-&gt;3)-beta-D-Gal-(1-&gt;4)-beta-D-Xyl)-L-seryl-[protein] + UDP + H(+)</text>
        <dbReference type="Rhea" id="RHEA:24168"/>
        <dbReference type="Rhea" id="RHEA-COMP:12571"/>
        <dbReference type="Rhea" id="RHEA-COMP:12573"/>
        <dbReference type="ChEBI" id="CHEBI:15378"/>
        <dbReference type="ChEBI" id="CHEBI:58052"/>
        <dbReference type="ChEBI" id="CHEBI:58223"/>
        <dbReference type="ChEBI" id="CHEBI:132090"/>
        <dbReference type="ChEBI" id="CHEBI:132093"/>
        <dbReference type="EC" id="2.4.1.135"/>
    </reaction>
</comment>
<comment type="cofactor">
    <cofactor>
        <name>Mn(2+)</name>
        <dbReference type="ChEBI" id="CHEBI:29035"/>
    </cofactor>
</comment>
<comment type="pathway">
    <text>Protein modification; protein glycosylation.</text>
</comment>
<comment type="subunit">
    <text evidence="5">Homodimer.</text>
</comment>
<comment type="subcellular location">
    <subcellularLocation>
        <location>Golgi apparatus membrane</location>
        <topology>Single-pass type II membrane protein</topology>
    </subcellularLocation>
</comment>
<comment type="tissue specificity">
    <text>Expressed in the trachea, retina, spinal cord, hippocampus and other brain regions, and, at lower levels, in testis and ovary.</text>
</comment>
<comment type="similarity">
    <text evidence="5">Belongs to the glycosyltransferase 43 family.</text>
</comment>
<comment type="sequence caution" evidence="5">
    <conflict type="erroneous initiation">
        <sequence resource="EMBL-CDS" id="BAB70889"/>
    </conflict>
</comment>
<comment type="sequence caution" evidence="5">
    <conflict type="erroneous initiation">
        <sequence resource="EMBL-CDS" id="BAB85549"/>
    </conflict>
</comment>
<dbReference type="EC" id="2.4.1.135" evidence="2"/>
<dbReference type="EMBL" id="AY070019">
    <property type="protein sequence ID" value="AAL57718.1"/>
    <property type="molecule type" value="mRNA"/>
</dbReference>
<dbReference type="EMBL" id="AY070110">
    <property type="protein sequence ID" value="AAL58977.1"/>
    <property type="molecule type" value="Genomic_DNA"/>
</dbReference>
<dbReference type="EMBL" id="AY070108">
    <property type="protein sequence ID" value="AAL58977.1"/>
    <property type="status" value="JOINED"/>
    <property type="molecule type" value="Genomic_DNA"/>
</dbReference>
<dbReference type="EMBL" id="AY070109">
    <property type="protein sequence ID" value="AAL58977.1"/>
    <property type="status" value="JOINED"/>
    <property type="molecule type" value="Genomic_DNA"/>
</dbReference>
<dbReference type="EMBL" id="AB075843">
    <property type="protein sequence ID" value="BAB85549.1"/>
    <property type="status" value="ALT_INIT"/>
    <property type="molecule type" value="mRNA"/>
</dbReference>
<dbReference type="EMBL" id="AL121961">
    <property type="status" value="NOT_ANNOTATED_CDS"/>
    <property type="molecule type" value="Genomic_DNA"/>
</dbReference>
<dbReference type="EMBL" id="AL450320">
    <property type="status" value="NOT_ANNOTATED_CDS"/>
    <property type="molecule type" value="Genomic_DNA"/>
</dbReference>
<dbReference type="EMBL" id="AK055248">
    <property type="protein sequence ID" value="BAB70889.1"/>
    <property type="status" value="ALT_INIT"/>
    <property type="molecule type" value="mRNA"/>
</dbReference>
<dbReference type="CCDS" id="CCDS4974.1"/>
<dbReference type="RefSeq" id="NP_542780.1">
    <property type="nucleotide sequence ID" value="NM_080742.3"/>
</dbReference>
<dbReference type="PDB" id="2D0J">
    <property type="method" value="X-ray"/>
    <property type="resolution" value="2.00 A"/>
    <property type="chains" value="A/B/C/D=78-323"/>
</dbReference>
<dbReference type="PDBsum" id="2D0J"/>
<dbReference type="SMR" id="Q9NPZ5"/>
<dbReference type="BioGRID" id="126422">
    <property type="interactions" value="25"/>
</dbReference>
<dbReference type="FunCoup" id="Q9NPZ5">
    <property type="interactions" value="113"/>
</dbReference>
<dbReference type="IntAct" id="Q9NPZ5">
    <property type="interactions" value="18"/>
</dbReference>
<dbReference type="STRING" id="9606.ENSP00000230053"/>
<dbReference type="CAZy" id="GT43">
    <property type="family name" value="Glycosyltransferase Family 43"/>
</dbReference>
<dbReference type="GlyCosmos" id="Q9NPZ5">
    <property type="glycosylation" value="2 sites, No reported glycans"/>
</dbReference>
<dbReference type="GlyGen" id="Q9NPZ5">
    <property type="glycosylation" value="3 sites, 1 N-linked glycan (1 site)"/>
</dbReference>
<dbReference type="iPTMnet" id="Q9NPZ5"/>
<dbReference type="PhosphoSitePlus" id="Q9NPZ5"/>
<dbReference type="BioMuta" id="B3GAT2"/>
<dbReference type="DMDM" id="14285363"/>
<dbReference type="jPOST" id="Q9NPZ5"/>
<dbReference type="MassIVE" id="Q9NPZ5"/>
<dbReference type="PaxDb" id="9606-ENSP00000230053"/>
<dbReference type="PeptideAtlas" id="Q9NPZ5"/>
<dbReference type="ProteomicsDB" id="82050"/>
<dbReference type="Antibodypedia" id="2343">
    <property type="antibodies" value="77 antibodies from 18 providers"/>
</dbReference>
<dbReference type="DNASU" id="135152"/>
<dbReference type="Ensembl" id="ENST00000230053.11">
    <property type="protein sequence ID" value="ENSP00000230053.6"/>
    <property type="gene ID" value="ENSG00000112309.11"/>
</dbReference>
<dbReference type="GeneID" id="135152"/>
<dbReference type="KEGG" id="hsa:135152"/>
<dbReference type="MANE-Select" id="ENST00000230053.11">
    <property type="protein sequence ID" value="ENSP00000230053.6"/>
    <property type="RefSeq nucleotide sequence ID" value="NM_080742.3"/>
    <property type="RefSeq protein sequence ID" value="NP_542780.1"/>
</dbReference>
<dbReference type="UCSC" id="uc003pfv.4">
    <property type="organism name" value="human"/>
</dbReference>
<dbReference type="AGR" id="HGNC:922"/>
<dbReference type="CTD" id="135152"/>
<dbReference type="DisGeNET" id="135152"/>
<dbReference type="GeneCards" id="B3GAT2"/>
<dbReference type="HGNC" id="HGNC:922">
    <property type="gene designation" value="B3GAT2"/>
</dbReference>
<dbReference type="HPA" id="ENSG00000112309">
    <property type="expression patterns" value="Group enriched (brain, retina)"/>
</dbReference>
<dbReference type="MIM" id="607497">
    <property type="type" value="gene"/>
</dbReference>
<dbReference type="neXtProt" id="NX_Q9NPZ5"/>
<dbReference type="OpenTargets" id="ENSG00000112309"/>
<dbReference type="PharmGKB" id="PA25216"/>
<dbReference type="VEuPathDB" id="HostDB:ENSG00000112309"/>
<dbReference type="eggNOG" id="KOG1476">
    <property type="taxonomic scope" value="Eukaryota"/>
</dbReference>
<dbReference type="GeneTree" id="ENSGT00940000159583"/>
<dbReference type="HOGENOM" id="CLU_045177_2_0_1"/>
<dbReference type="InParanoid" id="Q9NPZ5"/>
<dbReference type="OMA" id="RNVALAW"/>
<dbReference type="OrthoDB" id="675023at2759"/>
<dbReference type="PAN-GO" id="Q9NPZ5">
    <property type="GO annotations" value="4 GO annotations based on evolutionary models"/>
</dbReference>
<dbReference type="PhylomeDB" id="Q9NPZ5"/>
<dbReference type="TreeFam" id="TF313522"/>
<dbReference type="BioCyc" id="MetaCyc:HS03557-MONOMER"/>
<dbReference type="PathwayCommons" id="Q9NPZ5"/>
<dbReference type="Reactome" id="R-HSA-1971475">
    <property type="pathway name" value="A tetrasaccharide linker sequence is required for GAG synthesis"/>
</dbReference>
<dbReference type="SignaLink" id="Q9NPZ5"/>
<dbReference type="UniPathway" id="UPA00378"/>
<dbReference type="BioGRID-ORCS" id="135152">
    <property type="hits" value="7 hits in 1138 CRISPR screens"/>
</dbReference>
<dbReference type="ChiTaRS" id="B3GAT2">
    <property type="organism name" value="human"/>
</dbReference>
<dbReference type="EvolutionaryTrace" id="Q9NPZ5"/>
<dbReference type="GeneWiki" id="B3GAT2"/>
<dbReference type="GenomeRNAi" id="135152"/>
<dbReference type="Pharos" id="Q9NPZ5">
    <property type="development level" value="Tbio"/>
</dbReference>
<dbReference type="PRO" id="PR:Q9NPZ5"/>
<dbReference type="Proteomes" id="UP000005640">
    <property type="component" value="Chromosome 6"/>
</dbReference>
<dbReference type="RNAct" id="Q9NPZ5">
    <property type="molecule type" value="protein"/>
</dbReference>
<dbReference type="Bgee" id="ENSG00000112309">
    <property type="expression patterns" value="Expressed in ventricular zone and 140 other cell types or tissues"/>
</dbReference>
<dbReference type="ExpressionAtlas" id="Q9NPZ5">
    <property type="expression patterns" value="baseline and differential"/>
</dbReference>
<dbReference type="GO" id="GO:0000139">
    <property type="term" value="C:Golgi membrane"/>
    <property type="evidence" value="ECO:0000318"/>
    <property type="project" value="GO_Central"/>
</dbReference>
<dbReference type="GO" id="GO:0015018">
    <property type="term" value="F:galactosylgalactosylxylosylprotein 3-beta-glucuronosyltransferase activity"/>
    <property type="evidence" value="ECO:0000250"/>
    <property type="project" value="UniProtKB"/>
</dbReference>
<dbReference type="GO" id="GO:0046872">
    <property type="term" value="F:metal ion binding"/>
    <property type="evidence" value="ECO:0007669"/>
    <property type="project" value="UniProtKB-KW"/>
</dbReference>
<dbReference type="GO" id="GO:0016051">
    <property type="term" value="P:carbohydrate biosynthetic process"/>
    <property type="evidence" value="ECO:0007669"/>
    <property type="project" value="Ensembl"/>
</dbReference>
<dbReference type="GO" id="GO:0005975">
    <property type="term" value="P:carbohydrate metabolic process"/>
    <property type="evidence" value="ECO:0000318"/>
    <property type="project" value="GO_Central"/>
</dbReference>
<dbReference type="GO" id="GO:0050650">
    <property type="term" value="P:chondroitin sulfate proteoglycan biosynthetic process"/>
    <property type="evidence" value="ECO:0000318"/>
    <property type="project" value="GO_Central"/>
</dbReference>
<dbReference type="GO" id="GO:0006486">
    <property type="term" value="P:protein glycosylation"/>
    <property type="evidence" value="ECO:0007669"/>
    <property type="project" value="UniProtKB-UniPathway"/>
</dbReference>
<dbReference type="CDD" id="cd00218">
    <property type="entry name" value="GlcAT-I"/>
    <property type="match status" value="1"/>
</dbReference>
<dbReference type="FunFam" id="3.90.550.10:FF:000010">
    <property type="entry name" value="Galactosylgalactosylxylosylprotein 3-beta-glucuronosyltransferase"/>
    <property type="match status" value="1"/>
</dbReference>
<dbReference type="Gene3D" id="3.90.550.10">
    <property type="entry name" value="Spore Coat Polysaccharide Biosynthesis Protein SpsA, Chain A"/>
    <property type="match status" value="1"/>
</dbReference>
<dbReference type="InterPro" id="IPR005027">
    <property type="entry name" value="Glyco_trans_43"/>
</dbReference>
<dbReference type="InterPro" id="IPR029044">
    <property type="entry name" value="Nucleotide-diphossugar_trans"/>
</dbReference>
<dbReference type="PANTHER" id="PTHR10896:SF8">
    <property type="entry name" value="GALACTOSYLGALACTOSYLXYLOSYLPROTEIN 3-BETA-GLUCURONOSYLTRANSFERASE 2"/>
    <property type="match status" value="1"/>
</dbReference>
<dbReference type="PANTHER" id="PTHR10896">
    <property type="entry name" value="GALACTOSYLGALACTOSYLXYLOSYLPROTEIN 3-BETA-GLUCURONOSYLTRANSFERASE BETA-1,3-GLUCURONYLTRANSFERASE"/>
    <property type="match status" value="1"/>
</dbReference>
<dbReference type="Pfam" id="PF03360">
    <property type="entry name" value="Glyco_transf_43"/>
    <property type="match status" value="1"/>
</dbReference>
<dbReference type="SUPFAM" id="SSF53448">
    <property type="entry name" value="Nucleotide-diphospho-sugar transferases"/>
    <property type="match status" value="1"/>
</dbReference>
<gene>
    <name type="primary">B3GAT2</name>
    <name type="synonym">GLCATS</name>
    <name type="synonym">KIAA1963</name>
</gene>